<proteinExistence type="evidence at transcript level"/>
<sequence length="153" mass="17159">MDQEAVGNVVLLAIVTLISVVQNGFFAHKVEHESRNQNGRSFQRTGTLAFERVYTANQNCVDAYPTFLAVLWTAGLLCSQVPAAFAGLMYLFVRQKYFVGYLGERTQSTPGYIFGKRIILFLFLMSLAGILNYCLILLFGSDFENYIKTISTT</sequence>
<name>AL5AP_RABIT</name>
<accession>P30357</accession>
<gene>
    <name type="primary">ALOX5AP</name>
    <name type="synonym">FLAP</name>
</gene>
<evidence type="ECO:0000250" key="1"/>
<evidence type="ECO:0000305" key="2"/>
<organism>
    <name type="scientific">Oryctolagus cuniculus</name>
    <name type="common">Rabbit</name>
    <dbReference type="NCBI Taxonomy" id="9986"/>
    <lineage>
        <taxon>Eukaryota</taxon>
        <taxon>Metazoa</taxon>
        <taxon>Chordata</taxon>
        <taxon>Craniata</taxon>
        <taxon>Vertebrata</taxon>
        <taxon>Euteleostomi</taxon>
        <taxon>Mammalia</taxon>
        <taxon>Eutheria</taxon>
        <taxon>Euarchontoglires</taxon>
        <taxon>Glires</taxon>
        <taxon>Lagomorpha</taxon>
        <taxon>Leporidae</taxon>
        <taxon>Oryctolagus</taxon>
    </lineage>
</organism>
<keyword id="KW-0256">Endoplasmic reticulum</keyword>
<keyword id="KW-0434">Leukotriene biosynthesis</keyword>
<keyword id="KW-0472">Membrane</keyword>
<keyword id="KW-0539">Nucleus</keyword>
<keyword id="KW-1185">Reference proteome</keyword>
<keyword id="KW-0812">Transmembrane</keyword>
<keyword id="KW-1133">Transmembrane helix</keyword>
<dbReference type="EMBL" id="M96556">
    <property type="protein sequence ID" value="AAA31253.1"/>
    <property type="molecule type" value="mRNA"/>
</dbReference>
<dbReference type="SMR" id="P30357"/>
<dbReference type="FunCoup" id="P30357">
    <property type="interactions" value="221"/>
</dbReference>
<dbReference type="STRING" id="9986.ENSOCUP00000048418"/>
<dbReference type="PaxDb" id="9986-ENSOCUP00000007090"/>
<dbReference type="eggNOG" id="ENOG502RZJB">
    <property type="taxonomic scope" value="Eukaryota"/>
</dbReference>
<dbReference type="InParanoid" id="P30357"/>
<dbReference type="Proteomes" id="UP000001811">
    <property type="component" value="Unplaced"/>
</dbReference>
<dbReference type="GO" id="GO:0005789">
    <property type="term" value="C:endoplasmic reticulum membrane"/>
    <property type="evidence" value="ECO:0007669"/>
    <property type="project" value="UniProtKB-SubCell"/>
</dbReference>
<dbReference type="GO" id="GO:0005635">
    <property type="term" value="C:nuclear envelope"/>
    <property type="evidence" value="ECO:0000250"/>
    <property type="project" value="UniProtKB"/>
</dbReference>
<dbReference type="GO" id="GO:0031965">
    <property type="term" value="C:nuclear membrane"/>
    <property type="evidence" value="ECO:0000250"/>
    <property type="project" value="UniProtKB"/>
</dbReference>
<dbReference type="GO" id="GO:0050544">
    <property type="term" value="F:arachidonate binding"/>
    <property type="evidence" value="ECO:0000250"/>
    <property type="project" value="UniProtKB"/>
</dbReference>
<dbReference type="GO" id="GO:0008047">
    <property type="term" value="F:enzyme activator activity"/>
    <property type="evidence" value="ECO:0007669"/>
    <property type="project" value="InterPro"/>
</dbReference>
<dbReference type="GO" id="GO:0004602">
    <property type="term" value="F:glutathione peroxidase activity"/>
    <property type="evidence" value="ECO:0007669"/>
    <property type="project" value="TreeGrafter"/>
</dbReference>
<dbReference type="GO" id="GO:0004364">
    <property type="term" value="F:glutathione transferase activity"/>
    <property type="evidence" value="ECO:0007669"/>
    <property type="project" value="TreeGrafter"/>
</dbReference>
<dbReference type="GO" id="GO:0004464">
    <property type="term" value="F:leukotriene-C4 synthase activity"/>
    <property type="evidence" value="ECO:0007669"/>
    <property type="project" value="TreeGrafter"/>
</dbReference>
<dbReference type="GO" id="GO:0019370">
    <property type="term" value="P:leukotriene biosynthetic process"/>
    <property type="evidence" value="ECO:0007669"/>
    <property type="project" value="UniProtKB-KW"/>
</dbReference>
<dbReference type="FunFam" id="1.20.120.550:FF:000003">
    <property type="entry name" value="Leukotriene C4 synthase"/>
    <property type="match status" value="1"/>
</dbReference>
<dbReference type="Gene3D" id="1.20.120.550">
    <property type="entry name" value="Membrane associated eicosanoid/glutathione metabolism-like domain"/>
    <property type="match status" value="1"/>
</dbReference>
<dbReference type="InterPro" id="IPR001446">
    <property type="entry name" value="5_LipOase_AP"/>
</dbReference>
<dbReference type="InterPro" id="IPR018295">
    <property type="entry name" value="FLAP/GST2/LTC4S_CS"/>
</dbReference>
<dbReference type="InterPro" id="IPR050997">
    <property type="entry name" value="MAPEG"/>
</dbReference>
<dbReference type="InterPro" id="IPR023352">
    <property type="entry name" value="MAPEG-like_dom_sf"/>
</dbReference>
<dbReference type="InterPro" id="IPR001129">
    <property type="entry name" value="Membr-assoc_MAPEG"/>
</dbReference>
<dbReference type="PANTHER" id="PTHR10250:SF2">
    <property type="entry name" value="ARACHIDONATE 5-LIPOXYGENASE-ACTIVATING PROTEIN"/>
    <property type="match status" value="1"/>
</dbReference>
<dbReference type="PANTHER" id="PTHR10250">
    <property type="entry name" value="MICROSOMAL GLUTATHIONE S-TRANSFERASE"/>
    <property type="match status" value="1"/>
</dbReference>
<dbReference type="Pfam" id="PF01124">
    <property type="entry name" value="MAPEG"/>
    <property type="match status" value="1"/>
</dbReference>
<dbReference type="PRINTS" id="PR00488">
    <property type="entry name" value="5LPOXGNASEAP"/>
</dbReference>
<dbReference type="SUPFAM" id="SSF161084">
    <property type="entry name" value="MAPEG domain-like"/>
    <property type="match status" value="1"/>
</dbReference>
<dbReference type="PROSITE" id="PS01297">
    <property type="entry name" value="FLAP_GST2_LTC4S"/>
    <property type="match status" value="1"/>
</dbReference>
<comment type="function">
    <text evidence="1">Required for leukotriene biosynthesis by ALOX5 (5-lipoxygenase). Anchors ALOX5 to the membrane. Binds arachidonic acid, and could play an essential role in the transfer of arachidonic acid to ALOX5. Binds to MK-886, a compound that blocks the biosynthesis of leukotrienes (By similarity).</text>
</comment>
<comment type="subunit">
    <text evidence="1">Homotrimer. Interacts with LTC4S and ALOX5 (By similarity).</text>
</comment>
<comment type="subcellular location">
    <subcellularLocation>
        <location evidence="1">Nucleus membrane</location>
        <topology evidence="1">Multi-pass membrane protein</topology>
    </subcellularLocation>
    <subcellularLocation>
        <location evidence="1">Endoplasmic reticulum membrane</location>
        <topology evidence="1">Multi-pass membrane protein</topology>
    </subcellularLocation>
</comment>
<comment type="domain">
    <text evidence="1">The C-terminal part after residue 140 is mostly disordered.</text>
</comment>
<comment type="similarity">
    <text evidence="2">Belongs to the MAPEG family.</text>
</comment>
<protein>
    <recommendedName>
        <fullName>Arachidonate 5-lipoxygenase-activating protein</fullName>
    </recommendedName>
    <alternativeName>
        <fullName>FLAP</fullName>
    </alternativeName>
    <alternativeName>
        <fullName>MK-886-binding protein</fullName>
    </alternativeName>
</protein>
<reference key="1">
    <citation type="journal article" date="1992" name="Mol. Pharmacol.">
        <title>Cross-species comparison of 5-lipoxygenase-activating protein.</title>
        <authorList>
            <person name="Vickers P.J."/>
            <person name="O'Neill G.P."/>
            <person name="Mancini J.A."/>
            <person name="Charleson S."/>
            <person name="Abramovitz M."/>
        </authorList>
    </citation>
    <scope>NUCLEOTIDE SEQUENCE [MRNA]</scope>
</reference>
<feature type="chain" id="PRO_0000217755" description="Arachidonate 5-lipoxygenase-activating protein">
    <location>
        <begin position="1"/>
        <end position="153" status="greater than"/>
    </location>
</feature>
<feature type="topological domain" description="Lumenal" evidence="1">
    <location>
        <begin position="1"/>
        <end position="8"/>
    </location>
</feature>
<feature type="transmembrane region" description="Helical" evidence="1">
    <location>
        <begin position="9"/>
        <end position="30"/>
    </location>
</feature>
<feature type="topological domain" description="Cytoplasmic" evidence="1">
    <location>
        <begin position="31"/>
        <end position="52"/>
    </location>
</feature>
<feature type="transmembrane region" description="Helical" evidence="1">
    <location>
        <begin position="53"/>
        <end position="77"/>
    </location>
</feature>
<feature type="topological domain" description="Lumenal" evidence="1">
    <location>
        <begin position="78"/>
        <end position="80"/>
    </location>
</feature>
<feature type="transmembrane region" description="Helical" evidence="1">
    <location>
        <begin position="81"/>
        <end position="102"/>
    </location>
</feature>
<feature type="topological domain" description="Cytoplasmic" evidence="1">
    <location>
        <begin position="103"/>
        <end position="107"/>
    </location>
</feature>
<feature type="intramembrane region" evidence="1">
    <location>
        <begin position="108"/>
        <end position="115"/>
    </location>
</feature>
<feature type="transmembrane region" description="Helical" evidence="1">
    <location>
        <begin position="116"/>
        <end position="128"/>
    </location>
</feature>
<feature type="topological domain" description="Lumenal" evidence="1">
    <location>
        <begin position="129"/>
        <end position="153"/>
    </location>
</feature>
<feature type="non-terminal residue">
    <location>
        <position position="153"/>
    </location>
</feature>